<proteinExistence type="evidence at transcript level"/>
<evidence type="ECO:0000250" key="1"/>
<evidence type="ECO:0000250" key="2">
    <source>
        <dbReference type="UniProtKB" id="Q53FT3"/>
    </source>
</evidence>
<evidence type="ECO:0000250" key="3">
    <source>
        <dbReference type="UniProtKB" id="Q9DD02"/>
    </source>
</evidence>
<evidence type="ECO:0000303" key="4">
    <source>
    </source>
</evidence>
<evidence type="ECO:0000305" key="5"/>
<evidence type="ECO:0000312" key="6">
    <source>
        <dbReference type="RGD" id="1359455"/>
    </source>
</evidence>
<comment type="function">
    <text evidence="1">Acts as a specific nuclear import carrier for HSP70 proteins following heat-shock stress: acts by mediating the nucleoporin-dependent translocation of ATP-bound HSP70 proteins into the nucleus. HSP70 proteins import is required to protect cells from heat shock damages. Does not translocate ADP-bound HSP70 proteins into the nucleus (By similarity).</text>
</comment>
<comment type="subunit">
    <text evidence="2">Forms an asymmetric homodimer; required for binding and nuclear import of HSP70 proteins. Interacts with ATP-bound HSP70 proteins. Interacts with NUP62 and NUP153 (via F-X-F-G repeats). Interacts with HSPA8.</text>
</comment>
<comment type="subcellular location">
    <subcellularLocation>
        <location evidence="3">Cytoplasm</location>
    </subcellularLocation>
    <subcellularLocation>
        <location evidence="2">Cytoplasm</location>
        <location evidence="2">Cytosol</location>
    </subcellularLocation>
    <subcellularLocation>
        <location evidence="2">Nucleus</location>
    </subcellularLocation>
</comment>
<comment type="alternative products">
    <event type="alternative splicing"/>
    <isoform>
        <id>Q5M808-1</id>
        <name>1</name>
        <sequence type="displayed"/>
    </isoform>
    <isoform>
        <id>Q5M808-2</id>
        <name>2</name>
        <sequence type="described" ref="VSP_043956"/>
    </isoform>
</comment>
<comment type="similarity">
    <text evidence="5">Belongs to the OPI10 family.</text>
</comment>
<keyword id="KW-0025">Alternative splicing</keyword>
<keyword id="KW-0963">Cytoplasm</keyword>
<keyword id="KW-0539">Nucleus</keyword>
<keyword id="KW-0653">Protein transport</keyword>
<keyword id="KW-1185">Reference proteome</keyword>
<keyword id="KW-0813">Transport</keyword>
<protein>
    <recommendedName>
        <fullName evidence="5">Protein Hikeshi</fullName>
    </recommendedName>
</protein>
<name>HIKES_RAT</name>
<sequence>MFGCLVAGRLVQTAAQQVAEDKFVFDLPDYENINHVVVFMLGTIPFPEGMGGSVYFSYPDSNGVPVWQLLGFVTNGKPSAIFKISGLKSGEGSQHPFGAMNIVRTPSVAQIGISVELLDSLAQQTPVGSAAVSSVDSFTQFTQKMLDNFYNFASSFALSQAQMTPNPSEMFIPANVVLKWYENFQRRLAQNPLFWKT</sequence>
<gene>
    <name evidence="6" type="primary">Hikeshi</name>
</gene>
<organism>
    <name type="scientific">Rattus norvegicus</name>
    <name type="common">Rat</name>
    <dbReference type="NCBI Taxonomy" id="10116"/>
    <lineage>
        <taxon>Eukaryota</taxon>
        <taxon>Metazoa</taxon>
        <taxon>Chordata</taxon>
        <taxon>Craniata</taxon>
        <taxon>Vertebrata</taxon>
        <taxon>Euteleostomi</taxon>
        <taxon>Mammalia</taxon>
        <taxon>Eutheria</taxon>
        <taxon>Euarchontoglires</taxon>
        <taxon>Glires</taxon>
        <taxon>Rodentia</taxon>
        <taxon>Myomorpha</taxon>
        <taxon>Muroidea</taxon>
        <taxon>Muridae</taxon>
        <taxon>Murinae</taxon>
        <taxon>Rattus</taxon>
    </lineage>
</organism>
<reference key="1">
    <citation type="journal article" date="2004" name="Nature">
        <title>Genome sequence of the Brown Norway rat yields insights into mammalian evolution.</title>
        <authorList>
            <person name="Gibbs R.A."/>
            <person name="Weinstock G.M."/>
            <person name="Metzker M.L."/>
            <person name="Muzny D.M."/>
            <person name="Sodergren E.J."/>
            <person name="Scherer S."/>
            <person name="Scott G."/>
            <person name="Steffen D."/>
            <person name="Worley K.C."/>
            <person name="Burch P.E."/>
            <person name="Okwuonu G."/>
            <person name="Hines S."/>
            <person name="Lewis L."/>
            <person name="Deramo C."/>
            <person name="Delgado O."/>
            <person name="Dugan-Rocha S."/>
            <person name="Miner G."/>
            <person name="Morgan M."/>
            <person name="Hawes A."/>
            <person name="Gill R."/>
            <person name="Holt R.A."/>
            <person name="Adams M.D."/>
            <person name="Amanatides P.G."/>
            <person name="Baden-Tillson H."/>
            <person name="Barnstead M."/>
            <person name="Chin S."/>
            <person name="Evans C.A."/>
            <person name="Ferriera S."/>
            <person name="Fosler C."/>
            <person name="Glodek A."/>
            <person name="Gu Z."/>
            <person name="Jennings D."/>
            <person name="Kraft C.L."/>
            <person name="Nguyen T."/>
            <person name="Pfannkoch C.M."/>
            <person name="Sitter C."/>
            <person name="Sutton G.G."/>
            <person name="Venter J.C."/>
            <person name="Woodage T."/>
            <person name="Smith D."/>
            <person name="Lee H.-M."/>
            <person name="Gustafson E."/>
            <person name="Cahill P."/>
            <person name="Kana A."/>
            <person name="Doucette-Stamm L."/>
            <person name="Weinstock K."/>
            <person name="Fechtel K."/>
            <person name="Weiss R.B."/>
            <person name="Dunn D.M."/>
            <person name="Green E.D."/>
            <person name="Blakesley R.W."/>
            <person name="Bouffard G.G."/>
            <person name="De Jong P.J."/>
            <person name="Osoegawa K."/>
            <person name="Zhu B."/>
            <person name="Marra M."/>
            <person name="Schein J."/>
            <person name="Bosdet I."/>
            <person name="Fjell C."/>
            <person name="Jones S."/>
            <person name="Krzywinski M."/>
            <person name="Mathewson C."/>
            <person name="Siddiqui A."/>
            <person name="Wye N."/>
            <person name="McPherson J."/>
            <person name="Zhao S."/>
            <person name="Fraser C.M."/>
            <person name="Shetty J."/>
            <person name="Shatsman S."/>
            <person name="Geer K."/>
            <person name="Chen Y."/>
            <person name="Abramzon S."/>
            <person name="Nierman W.C."/>
            <person name="Havlak P.H."/>
            <person name="Chen R."/>
            <person name="Durbin K.J."/>
            <person name="Egan A."/>
            <person name="Ren Y."/>
            <person name="Song X.-Z."/>
            <person name="Li B."/>
            <person name="Liu Y."/>
            <person name="Qin X."/>
            <person name="Cawley S."/>
            <person name="Cooney A.J."/>
            <person name="D'Souza L.M."/>
            <person name="Martin K."/>
            <person name="Wu J.Q."/>
            <person name="Gonzalez-Garay M.L."/>
            <person name="Jackson A.R."/>
            <person name="Kalafus K.J."/>
            <person name="McLeod M.P."/>
            <person name="Milosavljevic A."/>
            <person name="Virk D."/>
            <person name="Volkov A."/>
            <person name="Wheeler D.A."/>
            <person name="Zhang Z."/>
            <person name="Bailey J.A."/>
            <person name="Eichler E.E."/>
            <person name="Tuzun E."/>
            <person name="Birney E."/>
            <person name="Mongin E."/>
            <person name="Ureta-Vidal A."/>
            <person name="Woodwark C."/>
            <person name="Zdobnov E."/>
            <person name="Bork P."/>
            <person name="Suyama M."/>
            <person name="Torrents D."/>
            <person name="Alexandersson M."/>
            <person name="Trask B.J."/>
            <person name="Young J.M."/>
            <person name="Huang H."/>
            <person name="Wang H."/>
            <person name="Xing H."/>
            <person name="Daniels S."/>
            <person name="Gietzen D."/>
            <person name="Schmidt J."/>
            <person name="Stevens K."/>
            <person name="Vitt U."/>
            <person name="Wingrove J."/>
            <person name="Camara F."/>
            <person name="Mar Alba M."/>
            <person name="Abril J.F."/>
            <person name="Guigo R."/>
            <person name="Smit A."/>
            <person name="Dubchak I."/>
            <person name="Rubin E.M."/>
            <person name="Couronne O."/>
            <person name="Poliakov A."/>
            <person name="Huebner N."/>
            <person name="Ganten D."/>
            <person name="Goesele C."/>
            <person name="Hummel O."/>
            <person name="Kreitler T."/>
            <person name="Lee Y.-A."/>
            <person name="Monti J."/>
            <person name="Schulz H."/>
            <person name="Zimdahl H."/>
            <person name="Himmelbauer H."/>
            <person name="Lehrach H."/>
            <person name="Jacob H.J."/>
            <person name="Bromberg S."/>
            <person name="Gullings-Handley J."/>
            <person name="Jensen-Seaman M.I."/>
            <person name="Kwitek A.E."/>
            <person name="Lazar J."/>
            <person name="Pasko D."/>
            <person name="Tonellato P.J."/>
            <person name="Twigger S."/>
            <person name="Ponting C.P."/>
            <person name="Duarte J.M."/>
            <person name="Rice S."/>
            <person name="Goodstadt L."/>
            <person name="Beatson S.A."/>
            <person name="Emes R.D."/>
            <person name="Winter E.E."/>
            <person name="Webber C."/>
            <person name="Brandt P."/>
            <person name="Nyakatura G."/>
            <person name="Adetobi M."/>
            <person name="Chiaromonte F."/>
            <person name="Elnitski L."/>
            <person name="Eswara P."/>
            <person name="Hardison R.C."/>
            <person name="Hou M."/>
            <person name="Kolbe D."/>
            <person name="Makova K."/>
            <person name="Miller W."/>
            <person name="Nekrutenko A."/>
            <person name="Riemer C."/>
            <person name="Schwartz S."/>
            <person name="Taylor J."/>
            <person name="Yang S."/>
            <person name="Zhang Y."/>
            <person name="Lindpaintner K."/>
            <person name="Andrews T.D."/>
            <person name="Caccamo M."/>
            <person name="Clamp M."/>
            <person name="Clarke L."/>
            <person name="Curwen V."/>
            <person name="Durbin R.M."/>
            <person name="Eyras E."/>
            <person name="Searle S.M."/>
            <person name="Cooper G.M."/>
            <person name="Batzoglou S."/>
            <person name="Brudno M."/>
            <person name="Sidow A."/>
            <person name="Stone E.A."/>
            <person name="Payseur B.A."/>
            <person name="Bourque G."/>
            <person name="Lopez-Otin C."/>
            <person name="Puente X.S."/>
            <person name="Chakrabarti K."/>
            <person name="Chatterji S."/>
            <person name="Dewey C."/>
            <person name="Pachter L."/>
            <person name="Bray N."/>
            <person name="Yap V.B."/>
            <person name="Caspi A."/>
            <person name="Tesler G."/>
            <person name="Pevzner P.A."/>
            <person name="Haussler D."/>
            <person name="Roskin K.M."/>
            <person name="Baertsch R."/>
            <person name="Clawson H."/>
            <person name="Furey T.S."/>
            <person name="Hinrichs A.S."/>
            <person name="Karolchik D."/>
            <person name="Kent W.J."/>
            <person name="Rosenbloom K.R."/>
            <person name="Trumbower H."/>
            <person name="Weirauch M."/>
            <person name="Cooper D.N."/>
            <person name="Stenson P.D."/>
            <person name="Ma B."/>
            <person name="Brent M."/>
            <person name="Arumugam M."/>
            <person name="Shteynberg D."/>
            <person name="Copley R.R."/>
            <person name="Taylor M.S."/>
            <person name="Riethman H."/>
            <person name="Mudunuri U."/>
            <person name="Peterson J."/>
            <person name="Guyer M."/>
            <person name="Felsenfeld A."/>
            <person name="Old S."/>
            <person name="Mockrin S."/>
            <person name="Collins F.S."/>
        </authorList>
    </citation>
    <scope>NUCLEOTIDE SEQUENCE [LARGE SCALE GENOMIC DNA]</scope>
    <source>
        <strain>Brown Norway</strain>
    </source>
</reference>
<reference key="2">
    <citation type="submission" date="2005-09" db="EMBL/GenBank/DDBJ databases">
        <authorList>
            <person name="Mural R.J."/>
            <person name="Adams M.D."/>
            <person name="Myers E.W."/>
            <person name="Smith H.O."/>
            <person name="Venter J.C."/>
        </authorList>
    </citation>
    <scope>NUCLEOTIDE SEQUENCE [LARGE SCALE GENOMIC DNA]</scope>
    <source>
        <strain>Brown Norway</strain>
    </source>
</reference>
<reference key="3">
    <citation type="journal article" date="2004" name="Genome Res.">
        <title>The status, quality, and expansion of the NIH full-length cDNA project: the Mammalian Gene Collection (MGC).</title>
        <authorList>
            <consortium name="The MGC Project Team"/>
        </authorList>
    </citation>
    <scope>NUCLEOTIDE SEQUENCE [LARGE SCALE MRNA] (ISOFORM 2)</scope>
    <source>
        <tissue>Spleen</tissue>
    </source>
</reference>
<dbReference type="EMBL" id="CH473956">
    <property type="protein sequence ID" value="EDM18567.1"/>
    <property type="molecule type" value="Genomic_DNA"/>
</dbReference>
<dbReference type="EMBL" id="BC088340">
    <property type="protein sequence ID" value="AAH88340.1"/>
    <property type="molecule type" value="mRNA"/>
</dbReference>
<dbReference type="RefSeq" id="NP_001013919.1">
    <molecule id="Q5M808-2"/>
    <property type="nucleotide sequence ID" value="NM_001013897.2"/>
</dbReference>
<dbReference type="RefSeq" id="NP_001385660.1">
    <molecule id="Q5M808-1"/>
    <property type="nucleotide sequence ID" value="NM_001398731.1"/>
</dbReference>
<dbReference type="RefSeq" id="XP_006229724.1">
    <property type="nucleotide sequence ID" value="XM_006229662.3"/>
</dbReference>
<dbReference type="SMR" id="Q5M808"/>
<dbReference type="FunCoup" id="Q5M808">
    <property type="interactions" value="2935"/>
</dbReference>
<dbReference type="STRING" id="10116.ENSRNOP00000072747"/>
<dbReference type="PhosphoSitePlus" id="Q5M808"/>
<dbReference type="PaxDb" id="10116-ENSRNOP00000023468"/>
<dbReference type="PeptideAtlas" id="Q5M808"/>
<dbReference type="Ensembl" id="ENSRNOT00000023468.8">
    <molecule id="Q5M808-1"/>
    <property type="protein sequence ID" value="ENSRNOP00000023468.7"/>
    <property type="gene ID" value="ENSRNOG00000017383.8"/>
</dbReference>
<dbReference type="GeneID" id="293103"/>
<dbReference type="KEGG" id="rno:293103"/>
<dbReference type="UCSC" id="RGD:1359455">
    <molecule id="Q5M808-1"/>
    <property type="organism name" value="rat"/>
</dbReference>
<dbReference type="AGR" id="RGD:1359455"/>
<dbReference type="CTD" id="51501"/>
<dbReference type="RGD" id="1359455">
    <property type="gene designation" value="Hikeshi"/>
</dbReference>
<dbReference type="eggNOG" id="KOG4067">
    <property type="taxonomic scope" value="Eukaryota"/>
</dbReference>
<dbReference type="GeneTree" id="ENSGT00390000004056"/>
<dbReference type="HOGENOM" id="CLU_084839_2_0_1"/>
<dbReference type="InParanoid" id="Q5M808"/>
<dbReference type="OMA" id="WWAKFER"/>
<dbReference type="OrthoDB" id="10248398at2759"/>
<dbReference type="TreeFam" id="TF313222"/>
<dbReference type="Reactome" id="R-RNO-3371453">
    <property type="pathway name" value="Regulation of HSF1-mediated heat shock response"/>
</dbReference>
<dbReference type="PRO" id="PR:Q5M808"/>
<dbReference type="Proteomes" id="UP000002494">
    <property type="component" value="Chromosome 1"/>
</dbReference>
<dbReference type="Proteomes" id="UP000234681">
    <property type="component" value="Chromosome 1"/>
</dbReference>
<dbReference type="Bgee" id="ENSRNOG00000017383">
    <property type="expression patterns" value="Expressed in quadriceps femoris and 20 other cell types or tissues"/>
</dbReference>
<dbReference type="ExpressionAtlas" id="Q5M808">
    <property type="expression patterns" value="baseline and differential"/>
</dbReference>
<dbReference type="GO" id="GO:0005737">
    <property type="term" value="C:cytoplasm"/>
    <property type="evidence" value="ECO:0000266"/>
    <property type="project" value="RGD"/>
</dbReference>
<dbReference type="GO" id="GO:0005829">
    <property type="term" value="C:cytosol"/>
    <property type="evidence" value="ECO:0000250"/>
    <property type="project" value="UniProtKB"/>
</dbReference>
<dbReference type="GO" id="GO:0005634">
    <property type="term" value="C:nucleus"/>
    <property type="evidence" value="ECO:0000250"/>
    <property type="project" value="UniProtKB"/>
</dbReference>
<dbReference type="GO" id="GO:0030544">
    <property type="term" value="F:Hsp70 protein binding"/>
    <property type="evidence" value="ECO:0000250"/>
    <property type="project" value="UniProtKB"/>
</dbReference>
<dbReference type="GO" id="GO:0061608">
    <property type="term" value="F:nuclear import signal receptor activity"/>
    <property type="evidence" value="ECO:0000266"/>
    <property type="project" value="RGD"/>
</dbReference>
<dbReference type="GO" id="GO:0034605">
    <property type="term" value="P:cellular response to heat"/>
    <property type="evidence" value="ECO:0000250"/>
    <property type="project" value="UniProtKB"/>
</dbReference>
<dbReference type="GO" id="GO:0007030">
    <property type="term" value="P:Golgi organization"/>
    <property type="evidence" value="ECO:0000266"/>
    <property type="project" value="RGD"/>
</dbReference>
<dbReference type="GO" id="GO:0030324">
    <property type="term" value="P:lung development"/>
    <property type="evidence" value="ECO:0000266"/>
    <property type="project" value="RGD"/>
</dbReference>
<dbReference type="GO" id="GO:0006606">
    <property type="term" value="P:protein import into nucleus"/>
    <property type="evidence" value="ECO:0000250"/>
    <property type="project" value="UniProtKB"/>
</dbReference>
<dbReference type="GO" id="GO:0015031">
    <property type="term" value="P:protein transport"/>
    <property type="evidence" value="ECO:0000250"/>
    <property type="project" value="UniProtKB"/>
</dbReference>
<dbReference type="InterPro" id="IPR048364">
    <property type="entry name" value="Hikeshi-like_C"/>
</dbReference>
<dbReference type="InterPro" id="IPR008493">
    <property type="entry name" value="Hikeshi-like_N"/>
</dbReference>
<dbReference type="InterPro" id="IPR031318">
    <property type="entry name" value="OPI10"/>
</dbReference>
<dbReference type="PANTHER" id="PTHR12925">
    <property type="entry name" value="HIKESHI FAMILY MEMBER"/>
    <property type="match status" value="1"/>
</dbReference>
<dbReference type="PANTHER" id="PTHR12925:SF0">
    <property type="entry name" value="PROTEIN HIKESHI"/>
    <property type="match status" value="1"/>
</dbReference>
<dbReference type="Pfam" id="PF21057">
    <property type="entry name" value="Hikeshi-like_C"/>
    <property type="match status" value="1"/>
</dbReference>
<dbReference type="Pfam" id="PF05603">
    <property type="entry name" value="Hikeshi-like_N"/>
    <property type="match status" value="1"/>
</dbReference>
<accession>Q5M808</accession>
<accession>G3V889</accession>
<feature type="chain" id="PRO_0000245264" description="Protein Hikeshi">
    <location>
        <begin position="1"/>
        <end position="197"/>
    </location>
</feature>
<feature type="region of interest" description="Required for F-X-F-G repeats-nucleoporins recognition and nuclear import" evidence="2">
    <location>
        <begin position="18"/>
        <end position="55"/>
    </location>
</feature>
<feature type="region of interest" description="Flexible linker region involved in nuclear import of HSP70 proteins" evidence="2">
    <location>
        <begin position="124"/>
        <end position="134"/>
    </location>
</feature>
<feature type="splice variant" id="VSP_043956" description="In isoform 2." evidence="4">
    <location>
        <begin position="1"/>
        <end position="39"/>
    </location>
</feature>